<name>COPA1_ARATH</name>
<dbReference type="EMBL" id="AC004392">
    <property type="protein sequence ID" value="AAC28519.1"/>
    <property type="molecule type" value="Genomic_DNA"/>
</dbReference>
<dbReference type="EMBL" id="CP002684">
    <property type="protein sequence ID" value="AEE33914.1"/>
    <property type="molecule type" value="Genomic_DNA"/>
</dbReference>
<dbReference type="EMBL" id="AY050400">
    <property type="protein sequence ID" value="AAK91416.1"/>
    <property type="status" value="ALT_INIT"/>
    <property type="molecule type" value="mRNA"/>
</dbReference>
<dbReference type="EMBL" id="BT001048">
    <property type="protein sequence ID" value="AAN46802.1"/>
    <property type="status" value="ALT_INIT"/>
    <property type="molecule type" value="mRNA"/>
</dbReference>
<dbReference type="PIR" id="T02146">
    <property type="entry name" value="T02146"/>
</dbReference>
<dbReference type="RefSeq" id="NP_176393.1">
    <property type="nucleotide sequence ID" value="NM_104882.5"/>
</dbReference>
<dbReference type="SMR" id="Q94A40"/>
<dbReference type="BioGRID" id="27720">
    <property type="interactions" value="67"/>
</dbReference>
<dbReference type="FunCoup" id="Q94A40">
    <property type="interactions" value="4803"/>
</dbReference>
<dbReference type="IntAct" id="Q94A40">
    <property type="interactions" value="1"/>
</dbReference>
<dbReference type="STRING" id="3702.Q94A40"/>
<dbReference type="GlyGen" id="Q94A40">
    <property type="glycosylation" value="1 site"/>
</dbReference>
<dbReference type="iPTMnet" id="Q94A40"/>
<dbReference type="PaxDb" id="3702-AT1G62020.1"/>
<dbReference type="ProteomicsDB" id="242287"/>
<dbReference type="EnsemblPlants" id="AT1G62020.1">
    <property type="protein sequence ID" value="AT1G62020.1"/>
    <property type="gene ID" value="AT1G62020"/>
</dbReference>
<dbReference type="GeneID" id="842497"/>
<dbReference type="Gramene" id="AT1G62020.1">
    <property type="protein sequence ID" value="AT1G62020.1"/>
    <property type="gene ID" value="AT1G62020"/>
</dbReference>
<dbReference type="KEGG" id="ath:AT1G62020"/>
<dbReference type="Araport" id="AT1G62020"/>
<dbReference type="TAIR" id="AT1G62020"/>
<dbReference type="eggNOG" id="KOG0292">
    <property type="taxonomic scope" value="Eukaryota"/>
</dbReference>
<dbReference type="HOGENOM" id="CLU_007565_1_0_1"/>
<dbReference type="InParanoid" id="Q94A40"/>
<dbReference type="OMA" id="EMTYQKQ"/>
<dbReference type="PhylomeDB" id="Q94A40"/>
<dbReference type="CD-CODE" id="4299E36E">
    <property type="entry name" value="Nucleolus"/>
</dbReference>
<dbReference type="PRO" id="PR:Q94A40"/>
<dbReference type="Proteomes" id="UP000006548">
    <property type="component" value="Chromosome 1"/>
</dbReference>
<dbReference type="ExpressionAtlas" id="Q94A40">
    <property type="expression patterns" value="baseline and differential"/>
</dbReference>
<dbReference type="GO" id="GO:0030126">
    <property type="term" value="C:COPI vesicle coat"/>
    <property type="evidence" value="ECO:0007669"/>
    <property type="project" value="InterPro"/>
</dbReference>
<dbReference type="GO" id="GO:0000139">
    <property type="term" value="C:Golgi membrane"/>
    <property type="evidence" value="ECO:0007669"/>
    <property type="project" value="UniProtKB-SubCell"/>
</dbReference>
<dbReference type="GO" id="GO:0005634">
    <property type="term" value="C:nucleus"/>
    <property type="evidence" value="ECO:0007005"/>
    <property type="project" value="TAIR"/>
</dbReference>
<dbReference type="GO" id="GO:0005886">
    <property type="term" value="C:plasma membrane"/>
    <property type="evidence" value="ECO:0007005"/>
    <property type="project" value="TAIR"/>
</dbReference>
<dbReference type="GO" id="GO:0005198">
    <property type="term" value="F:structural molecule activity"/>
    <property type="evidence" value="ECO:0007669"/>
    <property type="project" value="InterPro"/>
</dbReference>
<dbReference type="GO" id="GO:0006888">
    <property type="term" value="P:endoplasmic reticulum to Golgi vesicle-mediated transport"/>
    <property type="evidence" value="ECO:0007669"/>
    <property type="project" value="InterPro"/>
</dbReference>
<dbReference type="GO" id="GO:0006886">
    <property type="term" value="P:intracellular protein transport"/>
    <property type="evidence" value="ECO:0007669"/>
    <property type="project" value="InterPro"/>
</dbReference>
<dbReference type="CDD" id="cd22948">
    <property type="entry name" value="Coatomer_WDAD_alpha"/>
    <property type="match status" value="1"/>
</dbReference>
<dbReference type="CDD" id="cd00200">
    <property type="entry name" value="WD40"/>
    <property type="match status" value="1"/>
</dbReference>
<dbReference type="FunFam" id="1.25.40.470:FF:000002">
    <property type="entry name" value="Coatomer subunit alpha"/>
    <property type="match status" value="1"/>
</dbReference>
<dbReference type="FunFam" id="2.130.10.10:FF:000010">
    <property type="entry name" value="Coatomer subunit alpha"/>
    <property type="match status" value="1"/>
</dbReference>
<dbReference type="Gene3D" id="1.25.40.470">
    <property type="match status" value="1"/>
</dbReference>
<dbReference type="Gene3D" id="2.130.10.10">
    <property type="entry name" value="YVTN repeat-like/Quinoprotein amine dehydrogenase"/>
    <property type="match status" value="1"/>
</dbReference>
<dbReference type="InterPro" id="IPR006692">
    <property type="entry name" value="Beta-prop_COPA/B_2nd"/>
</dbReference>
<dbReference type="InterPro" id="IPR047312">
    <property type="entry name" value="Coatomer_alpha_WD-assoc_reg"/>
</dbReference>
<dbReference type="InterPro" id="IPR016391">
    <property type="entry name" value="Coatomer_asu"/>
</dbReference>
<dbReference type="InterPro" id="IPR010714">
    <property type="entry name" value="Coatomer_asu_C"/>
</dbReference>
<dbReference type="InterPro" id="IPR050844">
    <property type="entry name" value="Coatomer_complex_subunit"/>
</dbReference>
<dbReference type="InterPro" id="IPR020472">
    <property type="entry name" value="G-protein_beta_WD-40_rep"/>
</dbReference>
<dbReference type="InterPro" id="IPR011048">
    <property type="entry name" value="Haem_d1_sf"/>
</dbReference>
<dbReference type="InterPro" id="IPR056176">
    <property type="entry name" value="TPR_COPA_B"/>
</dbReference>
<dbReference type="InterPro" id="IPR015943">
    <property type="entry name" value="WD40/YVTN_repeat-like_dom_sf"/>
</dbReference>
<dbReference type="InterPro" id="IPR019775">
    <property type="entry name" value="WD40_repeat_CS"/>
</dbReference>
<dbReference type="InterPro" id="IPR036322">
    <property type="entry name" value="WD40_repeat_dom_sf"/>
</dbReference>
<dbReference type="InterPro" id="IPR001680">
    <property type="entry name" value="WD40_rpt"/>
</dbReference>
<dbReference type="PANTHER" id="PTHR19876">
    <property type="entry name" value="COATOMER"/>
    <property type="match status" value="1"/>
</dbReference>
<dbReference type="PANTHER" id="PTHR19876:SF1">
    <property type="entry name" value="COATOMER SUBUNIT ALPHA"/>
    <property type="match status" value="1"/>
</dbReference>
<dbReference type="Pfam" id="PF04053">
    <property type="entry name" value="B-prop_COPA_B_2nd"/>
    <property type="match status" value="1"/>
</dbReference>
<dbReference type="Pfam" id="PF06957">
    <property type="entry name" value="COPI_C"/>
    <property type="match status" value="1"/>
</dbReference>
<dbReference type="Pfam" id="PF23953">
    <property type="entry name" value="TPR_COPA_B"/>
    <property type="match status" value="1"/>
</dbReference>
<dbReference type="Pfam" id="PF00400">
    <property type="entry name" value="WD40"/>
    <property type="match status" value="6"/>
</dbReference>
<dbReference type="PIRSF" id="PIRSF003354">
    <property type="entry name" value="Coatomer_alpha_subunit"/>
    <property type="match status" value="1"/>
</dbReference>
<dbReference type="PRINTS" id="PR00320">
    <property type="entry name" value="GPROTEINBRPT"/>
</dbReference>
<dbReference type="SMART" id="SM00320">
    <property type="entry name" value="WD40"/>
    <property type="match status" value="7"/>
</dbReference>
<dbReference type="SUPFAM" id="SSF51004">
    <property type="entry name" value="C-terminal (heme d1) domain of cytochrome cd1-nitrite reductase"/>
    <property type="match status" value="1"/>
</dbReference>
<dbReference type="SUPFAM" id="SSF50978">
    <property type="entry name" value="WD40 repeat-like"/>
    <property type="match status" value="1"/>
</dbReference>
<dbReference type="PROSITE" id="PS00678">
    <property type="entry name" value="WD_REPEATS_1"/>
    <property type="match status" value="1"/>
</dbReference>
<dbReference type="PROSITE" id="PS50082">
    <property type="entry name" value="WD_REPEATS_2"/>
    <property type="match status" value="6"/>
</dbReference>
<dbReference type="PROSITE" id="PS50294">
    <property type="entry name" value="WD_REPEATS_REGION"/>
    <property type="match status" value="1"/>
</dbReference>
<reference key="1">
    <citation type="journal article" date="2000" name="Nature">
        <title>Sequence and analysis of chromosome 1 of the plant Arabidopsis thaliana.</title>
        <authorList>
            <person name="Theologis A."/>
            <person name="Ecker J.R."/>
            <person name="Palm C.J."/>
            <person name="Federspiel N.A."/>
            <person name="Kaul S."/>
            <person name="White O."/>
            <person name="Alonso J."/>
            <person name="Altafi H."/>
            <person name="Araujo R."/>
            <person name="Bowman C.L."/>
            <person name="Brooks S.Y."/>
            <person name="Buehler E."/>
            <person name="Chan A."/>
            <person name="Chao Q."/>
            <person name="Chen H."/>
            <person name="Cheuk R.F."/>
            <person name="Chin C.W."/>
            <person name="Chung M.K."/>
            <person name="Conn L."/>
            <person name="Conway A.B."/>
            <person name="Conway A.R."/>
            <person name="Creasy T.H."/>
            <person name="Dewar K."/>
            <person name="Dunn P."/>
            <person name="Etgu P."/>
            <person name="Feldblyum T.V."/>
            <person name="Feng J.-D."/>
            <person name="Fong B."/>
            <person name="Fujii C.Y."/>
            <person name="Gill J.E."/>
            <person name="Goldsmith A.D."/>
            <person name="Haas B."/>
            <person name="Hansen N.F."/>
            <person name="Hughes B."/>
            <person name="Huizar L."/>
            <person name="Hunter J.L."/>
            <person name="Jenkins J."/>
            <person name="Johnson-Hopson C."/>
            <person name="Khan S."/>
            <person name="Khaykin E."/>
            <person name="Kim C.J."/>
            <person name="Koo H.L."/>
            <person name="Kremenetskaia I."/>
            <person name="Kurtz D.B."/>
            <person name="Kwan A."/>
            <person name="Lam B."/>
            <person name="Langin-Hooper S."/>
            <person name="Lee A."/>
            <person name="Lee J.M."/>
            <person name="Lenz C.A."/>
            <person name="Li J.H."/>
            <person name="Li Y.-P."/>
            <person name="Lin X."/>
            <person name="Liu S.X."/>
            <person name="Liu Z.A."/>
            <person name="Luros J.S."/>
            <person name="Maiti R."/>
            <person name="Marziali A."/>
            <person name="Militscher J."/>
            <person name="Miranda M."/>
            <person name="Nguyen M."/>
            <person name="Nierman W.C."/>
            <person name="Osborne B.I."/>
            <person name="Pai G."/>
            <person name="Peterson J."/>
            <person name="Pham P.K."/>
            <person name="Rizzo M."/>
            <person name="Rooney T."/>
            <person name="Rowley D."/>
            <person name="Sakano H."/>
            <person name="Salzberg S.L."/>
            <person name="Schwartz J.R."/>
            <person name="Shinn P."/>
            <person name="Southwick A.M."/>
            <person name="Sun H."/>
            <person name="Tallon L.J."/>
            <person name="Tambunga G."/>
            <person name="Toriumi M.J."/>
            <person name="Town C.D."/>
            <person name="Utterback T."/>
            <person name="Van Aken S."/>
            <person name="Vaysberg M."/>
            <person name="Vysotskaia V.S."/>
            <person name="Walker M."/>
            <person name="Wu D."/>
            <person name="Yu G."/>
            <person name="Fraser C.M."/>
            <person name="Venter J.C."/>
            <person name="Davis R.W."/>
        </authorList>
    </citation>
    <scope>NUCLEOTIDE SEQUENCE [LARGE SCALE GENOMIC DNA]</scope>
    <source>
        <strain>cv. Columbia</strain>
    </source>
</reference>
<reference key="2">
    <citation type="journal article" date="2017" name="Plant J.">
        <title>Araport11: a complete reannotation of the Arabidopsis thaliana reference genome.</title>
        <authorList>
            <person name="Cheng C.Y."/>
            <person name="Krishnakumar V."/>
            <person name="Chan A.P."/>
            <person name="Thibaud-Nissen F."/>
            <person name="Schobel S."/>
            <person name="Town C.D."/>
        </authorList>
    </citation>
    <scope>GENOME REANNOTATION</scope>
    <source>
        <strain>cv. Columbia</strain>
    </source>
</reference>
<reference key="3">
    <citation type="journal article" date="2003" name="Science">
        <title>Empirical analysis of transcriptional activity in the Arabidopsis genome.</title>
        <authorList>
            <person name="Yamada K."/>
            <person name="Lim J."/>
            <person name="Dale J.M."/>
            <person name="Chen H."/>
            <person name="Shinn P."/>
            <person name="Palm C.J."/>
            <person name="Southwick A.M."/>
            <person name="Wu H.C."/>
            <person name="Kim C.J."/>
            <person name="Nguyen M."/>
            <person name="Pham P.K."/>
            <person name="Cheuk R.F."/>
            <person name="Karlin-Newmann G."/>
            <person name="Liu S.X."/>
            <person name="Lam B."/>
            <person name="Sakano H."/>
            <person name="Wu T."/>
            <person name="Yu G."/>
            <person name="Miranda M."/>
            <person name="Quach H.L."/>
            <person name="Tripp M."/>
            <person name="Chang C.H."/>
            <person name="Lee J.M."/>
            <person name="Toriumi M.J."/>
            <person name="Chan M.M."/>
            <person name="Tang C.C."/>
            <person name="Onodera C.S."/>
            <person name="Deng J.M."/>
            <person name="Akiyama K."/>
            <person name="Ansari Y."/>
            <person name="Arakawa T."/>
            <person name="Banh J."/>
            <person name="Banno F."/>
            <person name="Bowser L."/>
            <person name="Brooks S.Y."/>
            <person name="Carninci P."/>
            <person name="Chao Q."/>
            <person name="Choy N."/>
            <person name="Enju A."/>
            <person name="Goldsmith A.D."/>
            <person name="Gurjal M."/>
            <person name="Hansen N.F."/>
            <person name="Hayashizaki Y."/>
            <person name="Johnson-Hopson C."/>
            <person name="Hsuan V.W."/>
            <person name="Iida K."/>
            <person name="Karnes M."/>
            <person name="Khan S."/>
            <person name="Koesema E."/>
            <person name="Ishida J."/>
            <person name="Jiang P.X."/>
            <person name="Jones T."/>
            <person name="Kawai J."/>
            <person name="Kamiya A."/>
            <person name="Meyers C."/>
            <person name="Nakajima M."/>
            <person name="Narusaka M."/>
            <person name="Seki M."/>
            <person name="Sakurai T."/>
            <person name="Satou M."/>
            <person name="Tamse R."/>
            <person name="Vaysberg M."/>
            <person name="Wallender E.K."/>
            <person name="Wong C."/>
            <person name="Yamamura Y."/>
            <person name="Yuan S."/>
            <person name="Shinozaki K."/>
            <person name="Davis R.W."/>
            <person name="Theologis A."/>
            <person name="Ecker J.R."/>
        </authorList>
    </citation>
    <scope>NUCLEOTIDE SEQUENCE [LARGE SCALE MRNA] OF 722-1216</scope>
    <source>
        <strain>cv. Columbia</strain>
    </source>
</reference>
<sequence length="1216" mass="136566">MLTKFETKSNRVKGLSFHPKRPWILASLHSGVIQLWDYRMGTLIDRFDEHEGPVRGVHFHNSQPLFVSGGDDYKIKVWNYKNHRCLFTLLGHLDYIRTVQFHHEYPWIVSASDDQTIRIWNWQSRTCVSVLTGHNHYVMCASFHPKEDLVVSASLDQTVRVWDIGALRKKTVSPADDIMRLTQMNSDLFGGVDAIVKYVLEGHDRGVNWAAFHPTLPLIVSGADDRQVKLWRMNETKAWEVDTLRGHMNNVSSVMFHAKQDIIVSNSEDKSIRVWDATKRTGLQTFRREHDRFWILAVHPEMNLLAAGHDSGMIVFKLERERPAFALSGDSLFYAKDRFLRYYEYSTQRDSQVIPIRRPGTPSLNQSPRTLSYSPTENAVLICSDLDGGSYELYIIPKDSVGRSDVVQDAKRGTGGSAVFIARNRFAVLEKSTSQVLVKNLKNEVVKKSPLPIPTDAIFYAGTGNLLCRSEDKVVIFDLQQRLVLGELQTPFVRYVVWSSDMESVALLSKHTIIIASKKLVLQCTLHETIRVKSGAWDDNGVFIYTTLNHIKYCLPNGDSGIIRTLDVPIYITKVSGNTIFCLDRDGKNKAITINATEYIFKLSLLRKRYDHVMSMIKNSQLCGQAMIAYLQQKGFPEVALHFVEDERIRFNLALESGNISVAVASATQINEKDHWYRLGVEALRQGNSGIVEFAYQQTKNFERLSFLYLITGNLDKLSKLMKIAEVKNNVMGQFHNALYLGDVKERVKILENAGHLPLAYITASVHGLNDIAERLATELGDNVPSLPEGKTPSLLMPPTPIMCGGDWPLLRVMKGIFEGGLESADRGGTVDEEDVEGDWGEELDINVDGMENRDIEDILAAAEAGEEENDEEGGWGLEDLVLPPELDTPKASANARSSVFVTPPQGMPVSQSWSQKSSLAAEQAAAGSFDTAMRLLHRQLGIKNFTPLKSMFLDLFNGSHSYLRAFSSCPVVPLAIERGWSESSSPNVRSPPALVYDFSQLDEKLKSGYKATTTGKFTEALRLFLSILHTIPLVVVETRREVDEVKELIVIVKEYVLGLQMELKRREMKDDPVRQQELAAYFTHCNLQTPHLRLALLSAMGVCYKAKNLATASNFARRLLETSPVDSQAKMARQVVQAAERNMTDETKLNYDFRNPFVVCGSTYVPIYRGQKDVSCPYCTARFVPNQEGNICTVCDLAVIGADASGLLCSPSQVR</sequence>
<gene>
    <name type="ordered locus">At1g62020</name>
    <name type="ORF">F8K4.21</name>
</gene>
<keyword id="KW-0963">Cytoplasm</keyword>
<keyword id="KW-0968">Cytoplasmic vesicle</keyword>
<keyword id="KW-0931">ER-Golgi transport</keyword>
<keyword id="KW-0333">Golgi apparatus</keyword>
<keyword id="KW-0472">Membrane</keyword>
<keyword id="KW-0653">Protein transport</keyword>
<keyword id="KW-1185">Reference proteome</keyword>
<keyword id="KW-0677">Repeat</keyword>
<keyword id="KW-0813">Transport</keyword>
<keyword id="KW-0853">WD repeat</keyword>
<comment type="function">
    <text evidence="1">The coatomer is a cytosolic protein complex that binds to dilysine motifs and reversibly associates with Golgi non-clathrin-coated vesicles, which further mediate biosynthetic protein transport from the ER, via the Golgi up to the trans Golgi network. Coatomer complex is required for budding from Golgi membranes, and is essential for the retrograde Golgi-to-ER transport of dilysine-tagged proteins (By similarity).</text>
</comment>
<comment type="subunit">
    <text evidence="1">Oligomeric complex that consists of at least the alpha, beta, beta', gamma, delta, epsilon and zeta subunits.</text>
</comment>
<comment type="subcellular location">
    <subcellularLocation>
        <location evidence="1">Cytoplasm</location>
    </subcellularLocation>
    <subcellularLocation>
        <location evidence="1">Golgi apparatus membrane</location>
        <topology evidence="1">Peripheral membrane protein</topology>
        <orientation evidence="1">Cytoplasmic side</orientation>
    </subcellularLocation>
    <subcellularLocation>
        <location evidence="1">Cytoplasmic vesicle</location>
        <location evidence="1">COPI-coated vesicle membrane</location>
        <topology evidence="1">Peripheral membrane protein</topology>
        <orientation evidence="1">Cytoplasmic side</orientation>
    </subcellularLocation>
    <text evidence="1">The coatomer is cytoplasmic or polymerized on the cytoplasmic side of the Golgi, as well as on the vesicles/buds originating from it.</text>
</comment>
<comment type="sequence caution" evidence="2">
    <conflict type="erroneous initiation">
        <sequence resource="EMBL-CDS" id="AAK91416"/>
    </conflict>
</comment>
<comment type="sequence caution" evidence="2">
    <conflict type="erroneous initiation">
        <sequence resource="EMBL-CDS" id="AAN46802"/>
    </conflict>
</comment>
<evidence type="ECO:0000250" key="1"/>
<evidence type="ECO:0000305" key="2"/>
<protein>
    <recommendedName>
        <fullName>Coatomer subunit alpha-1</fullName>
    </recommendedName>
    <alternativeName>
        <fullName>Alpha-coat protein 1</fullName>
        <shortName>Alpha-COP 1</shortName>
    </alternativeName>
</protein>
<feature type="chain" id="PRO_0000285599" description="Coatomer subunit alpha-1">
    <location>
        <begin position="1"/>
        <end position="1216"/>
    </location>
</feature>
<feature type="repeat" description="WD 1">
    <location>
        <begin position="7"/>
        <end position="48"/>
    </location>
</feature>
<feature type="repeat" description="WD 2">
    <location>
        <begin position="49"/>
        <end position="88"/>
    </location>
</feature>
<feature type="repeat" description="WD 3">
    <location>
        <begin position="91"/>
        <end position="132"/>
    </location>
</feature>
<feature type="repeat" description="WD 4">
    <location>
        <begin position="133"/>
        <end position="172"/>
    </location>
</feature>
<feature type="repeat" description="WD 5">
    <location>
        <begin position="202"/>
        <end position="241"/>
    </location>
</feature>
<feature type="repeat" description="WD 6">
    <location>
        <begin position="246"/>
        <end position="285"/>
    </location>
</feature>
<feature type="repeat" description="WD 7">
    <location>
        <begin position="288"/>
        <end position="326"/>
    </location>
</feature>
<feature type="repeat" description="WD 8">
    <location>
        <begin position="363"/>
        <end position="404"/>
    </location>
</feature>
<organism>
    <name type="scientific">Arabidopsis thaliana</name>
    <name type="common">Mouse-ear cress</name>
    <dbReference type="NCBI Taxonomy" id="3702"/>
    <lineage>
        <taxon>Eukaryota</taxon>
        <taxon>Viridiplantae</taxon>
        <taxon>Streptophyta</taxon>
        <taxon>Embryophyta</taxon>
        <taxon>Tracheophyta</taxon>
        <taxon>Spermatophyta</taxon>
        <taxon>Magnoliopsida</taxon>
        <taxon>eudicotyledons</taxon>
        <taxon>Gunneridae</taxon>
        <taxon>Pentapetalae</taxon>
        <taxon>rosids</taxon>
        <taxon>malvids</taxon>
        <taxon>Brassicales</taxon>
        <taxon>Brassicaceae</taxon>
        <taxon>Camelineae</taxon>
        <taxon>Arabidopsis</taxon>
    </lineage>
</organism>
<proteinExistence type="evidence at transcript level"/>
<accession>Q94A40</accession>
<accession>O80706</accession>